<reference key="1">
    <citation type="journal article" date="2004" name="Mol. Plant Microbe Interact.">
        <title>The genome sequence of the Gram-positive sugarcane pathogen Leifsonia xyli subsp. xyli.</title>
        <authorList>
            <person name="Monteiro-Vitorello C.B."/>
            <person name="Camargo L.E.A."/>
            <person name="Van Sluys M.A."/>
            <person name="Kitajima J.P."/>
            <person name="Truffi D."/>
            <person name="do Amaral A.M."/>
            <person name="Harakava R."/>
            <person name="de Oliveira J.C.F."/>
            <person name="Wood D."/>
            <person name="de Oliveira M.C."/>
            <person name="Miyaki C.Y."/>
            <person name="Takita M.A."/>
            <person name="da Silva A.C.R."/>
            <person name="Furlan L.R."/>
            <person name="Carraro D.M."/>
            <person name="Camarotte G."/>
            <person name="Almeida N.F. Jr."/>
            <person name="Carrer H."/>
            <person name="Coutinho L.L."/>
            <person name="El-Dorry H.A."/>
            <person name="Ferro M.I.T."/>
            <person name="Gagliardi P.R."/>
            <person name="Giglioti E."/>
            <person name="Goldman M.H.S."/>
            <person name="Goldman G.H."/>
            <person name="Kimura E.T."/>
            <person name="Ferro E.S."/>
            <person name="Kuramae E.E."/>
            <person name="Lemos E.G.M."/>
            <person name="Lemos M.V.F."/>
            <person name="Mauro S.M.Z."/>
            <person name="Machado M.A."/>
            <person name="Marino C.L."/>
            <person name="Menck C.F."/>
            <person name="Nunes L.R."/>
            <person name="Oliveira R.C."/>
            <person name="Pereira G.G."/>
            <person name="Siqueira W."/>
            <person name="de Souza A.A."/>
            <person name="Tsai S.M."/>
            <person name="Zanca A.S."/>
            <person name="Simpson A.J.G."/>
            <person name="Brumbley S.M."/>
            <person name="Setubal J.C."/>
        </authorList>
    </citation>
    <scope>NUCLEOTIDE SEQUENCE [LARGE SCALE GENOMIC DNA]</scope>
    <source>
        <strain>CTCB07</strain>
    </source>
</reference>
<proteinExistence type="inferred from homology"/>
<evidence type="ECO:0000255" key="1">
    <source>
        <dbReference type="HAMAP-Rule" id="MF_00145"/>
    </source>
</evidence>
<sequence>MALRTLDSLGSLAGKRVVVRCDLNVPLKDGKITDDGRVRASIPTLHALIAQGAKVAIVSHLGRPEGAPDAQYSLAPVAQRLSELLGKPVTFASDTVGAGAAEAVSGLEDGDVALLENLRFNPGETSKDEGEREAFAAELAAFGDAFVSDGFGVVHRKQASVYELAKALPSAAGALIATELDVLDRLTENPERPYTVLLGGSKVSDKLGVIGHLLPRVDSLLIGGGMLFTFLAALGHRVGSSLLEADQIGTVKGYLEQAKQLGVEIVLPRDVVVASRFGVDAEHLVRPVDRIEDTGWGTSGLGLDIGPETAEVFSERIRAARTVFWNGPMGVFELAPFAAGTKAVAQALTEVDGLGVVGGGDSAAAVHALGFSDDQFGHISTGGGASLEFLEGKRLPGLEVLGW</sequence>
<gene>
    <name evidence="1" type="primary">pgk</name>
    <name type="ordered locus">Lxx11530</name>
</gene>
<accession>Q6AF44</accession>
<feature type="chain" id="PRO_0000145957" description="Phosphoglycerate kinase">
    <location>
        <begin position="1"/>
        <end position="403"/>
    </location>
</feature>
<feature type="binding site" evidence="1">
    <location>
        <begin position="22"/>
        <end position="24"/>
    </location>
    <ligand>
        <name>substrate</name>
    </ligand>
</feature>
<feature type="binding site" evidence="1">
    <location>
        <position position="37"/>
    </location>
    <ligand>
        <name>substrate</name>
    </ligand>
</feature>
<feature type="binding site" evidence="1">
    <location>
        <begin position="60"/>
        <end position="63"/>
    </location>
    <ligand>
        <name>substrate</name>
    </ligand>
</feature>
<feature type="binding site" evidence="1">
    <location>
        <position position="119"/>
    </location>
    <ligand>
        <name>substrate</name>
    </ligand>
</feature>
<feature type="binding site" evidence="1">
    <location>
        <position position="156"/>
    </location>
    <ligand>
        <name>substrate</name>
    </ligand>
</feature>
<feature type="binding site" evidence="1">
    <location>
        <position position="206"/>
    </location>
    <ligand>
        <name>ATP</name>
        <dbReference type="ChEBI" id="CHEBI:30616"/>
    </ligand>
</feature>
<feature type="binding site" evidence="1">
    <location>
        <position position="302"/>
    </location>
    <ligand>
        <name>ATP</name>
        <dbReference type="ChEBI" id="CHEBI:30616"/>
    </ligand>
</feature>
<feature type="binding site" evidence="1">
    <location>
        <position position="333"/>
    </location>
    <ligand>
        <name>ATP</name>
        <dbReference type="ChEBI" id="CHEBI:30616"/>
    </ligand>
</feature>
<feature type="binding site" evidence="1">
    <location>
        <begin position="359"/>
        <end position="362"/>
    </location>
    <ligand>
        <name>ATP</name>
        <dbReference type="ChEBI" id="CHEBI:30616"/>
    </ligand>
</feature>
<name>PGK_LEIXX</name>
<organism>
    <name type="scientific">Leifsonia xyli subsp. xyli (strain CTCB07)</name>
    <dbReference type="NCBI Taxonomy" id="281090"/>
    <lineage>
        <taxon>Bacteria</taxon>
        <taxon>Bacillati</taxon>
        <taxon>Actinomycetota</taxon>
        <taxon>Actinomycetes</taxon>
        <taxon>Micrococcales</taxon>
        <taxon>Microbacteriaceae</taxon>
        <taxon>Leifsonia</taxon>
    </lineage>
</organism>
<dbReference type="EC" id="2.7.2.3" evidence="1"/>
<dbReference type="EMBL" id="AE016822">
    <property type="protein sequence ID" value="AAT89001.1"/>
    <property type="molecule type" value="Genomic_DNA"/>
</dbReference>
<dbReference type="RefSeq" id="WP_011185997.1">
    <property type="nucleotide sequence ID" value="NC_006087.1"/>
</dbReference>
<dbReference type="SMR" id="Q6AF44"/>
<dbReference type="STRING" id="281090.Lxx11530"/>
<dbReference type="KEGG" id="lxx:Lxx11530"/>
<dbReference type="eggNOG" id="COG0126">
    <property type="taxonomic scope" value="Bacteria"/>
</dbReference>
<dbReference type="HOGENOM" id="CLU_025427_0_2_11"/>
<dbReference type="UniPathway" id="UPA00109">
    <property type="reaction ID" value="UER00185"/>
</dbReference>
<dbReference type="Proteomes" id="UP000001306">
    <property type="component" value="Chromosome"/>
</dbReference>
<dbReference type="GO" id="GO:0005829">
    <property type="term" value="C:cytosol"/>
    <property type="evidence" value="ECO:0007669"/>
    <property type="project" value="TreeGrafter"/>
</dbReference>
<dbReference type="GO" id="GO:0043531">
    <property type="term" value="F:ADP binding"/>
    <property type="evidence" value="ECO:0007669"/>
    <property type="project" value="TreeGrafter"/>
</dbReference>
<dbReference type="GO" id="GO:0005524">
    <property type="term" value="F:ATP binding"/>
    <property type="evidence" value="ECO:0007669"/>
    <property type="project" value="UniProtKB-KW"/>
</dbReference>
<dbReference type="GO" id="GO:0004618">
    <property type="term" value="F:phosphoglycerate kinase activity"/>
    <property type="evidence" value="ECO:0007669"/>
    <property type="project" value="UniProtKB-UniRule"/>
</dbReference>
<dbReference type="GO" id="GO:0006094">
    <property type="term" value="P:gluconeogenesis"/>
    <property type="evidence" value="ECO:0007669"/>
    <property type="project" value="TreeGrafter"/>
</dbReference>
<dbReference type="GO" id="GO:0006096">
    <property type="term" value="P:glycolytic process"/>
    <property type="evidence" value="ECO:0007669"/>
    <property type="project" value="UniProtKB-UniRule"/>
</dbReference>
<dbReference type="FunFam" id="3.40.50.1260:FF:000006">
    <property type="entry name" value="Phosphoglycerate kinase"/>
    <property type="match status" value="1"/>
</dbReference>
<dbReference type="FunFam" id="3.40.50.1260:FF:000031">
    <property type="entry name" value="Phosphoglycerate kinase 1"/>
    <property type="match status" value="1"/>
</dbReference>
<dbReference type="Gene3D" id="3.40.50.1260">
    <property type="entry name" value="Phosphoglycerate kinase, N-terminal domain"/>
    <property type="match status" value="2"/>
</dbReference>
<dbReference type="HAMAP" id="MF_00145">
    <property type="entry name" value="Phosphoglyc_kinase"/>
    <property type="match status" value="1"/>
</dbReference>
<dbReference type="InterPro" id="IPR001576">
    <property type="entry name" value="Phosphoglycerate_kinase"/>
</dbReference>
<dbReference type="InterPro" id="IPR015911">
    <property type="entry name" value="Phosphoglycerate_kinase_CS"/>
</dbReference>
<dbReference type="InterPro" id="IPR015824">
    <property type="entry name" value="Phosphoglycerate_kinase_N"/>
</dbReference>
<dbReference type="InterPro" id="IPR036043">
    <property type="entry name" value="Phosphoglycerate_kinase_sf"/>
</dbReference>
<dbReference type="PANTHER" id="PTHR11406">
    <property type="entry name" value="PHOSPHOGLYCERATE KINASE"/>
    <property type="match status" value="1"/>
</dbReference>
<dbReference type="PANTHER" id="PTHR11406:SF23">
    <property type="entry name" value="PHOSPHOGLYCERATE KINASE 1, CHLOROPLASTIC-RELATED"/>
    <property type="match status" value="1"/>
</dbReference>
<dbReference type="Pfam" id="PF00162">
    <property type="entry name" value="PGK"/>
    <property type="match status" value="1"/>
</dbReference>
<dbReference type="PIRSF" id="PIRSF000724">
    <property type="entry name" value="Pgk"/>
    <property type="match status" value="1"/>
</dbReference>
<dbReference type="PRINTS" id="PR00477">
    <property type="entry name" value="PHGLYCKINASE"/>
</dbReference>
<dbReference type="SUPFAM" id="SSF53748">
    <property type="entry name" value="Phosphoglycerate kinase"/>
    <property type="match status" value="1"/>
</dbReference>
<dbReference type="PROSITE" id="PS00111">
    <property type="entry name" value="PGLYCERATE_KINASE"/>
    <property type="match status" value="1"/>
</dbReference>
<comment type="catalytic activity">
    <reaction evidence="1">
        <text>(2R)-3-phosphoglycerate + ATP = (2R)-3-phospho-glyceroyl phosphate + ADP</text>
        <dbReference type="Rhea" id="RHEA:14801"/>
        <dbReference type="ChEBI" id="CHEBI:30616"/>
        <dbReference type="ChEBI" id="CHEBI:57604"/>
        <dbReference type="ChEBI" id="CHEBI:58272"/>
        <dbReference type="ChEBI" id="CHEBI:456216"/>
        <dbReference type="EC" id="2.7.2.3"/>
    </reaction>
</comment>
<comment type="pathway">
    <text evidence="1">Carbohydrate degradation; glycolysis; pyruvate from D-glyceraldehyde 3-phosphate: step 2/5.</text>
</comment>
<comment type="subunit">
    <text evidence="1">Monomer.</text>
</comment>
<comment type="subcellular location">
    <subcellularLocation>
        <location evidence="1">Cytoplasm</location>
    </subcellularLocation>
</comment>
<comment type="similarity">
    <text evidence="1">Belongs to the phosphoglycerate kinase family.</text>
</comment>
<protein>
    <recommendedName>
        <fullName evidence="1">Phosphoglycerate kinase</fullName>
        <ecNumber evidence="1">2.7.2.3</ecNumber>
    </recommendedName>
</protein>
<keyword id="KW-0067">ATP-binding</keyword>
<keyword id="KW-0963">Cytoplasm</keyword>
<keyword id="KW-0324">Glycolysis</keyword>
<keyword id="KW-0418">Kinase</keyword>
<keyword id="KW-0547">Nucleotide-binding</keyword>
<keyword id="KW-1185">Reference proteome</keyword>
<keyword id="KW-0808">Transferase</keyword>